<sequence>MIRLENVSYNYPDGTPALRNINIGIKKGEYIGITGKNGSGKSTLALHLNGLLRPQKGKVLVRGMDTGDFSKLQGIRKLVGIVFQNPETQFVGRTVEEDLAFGPENLCLPPIEIRKRVDRALAEIGLGKYRYRSPKTLSGGQGQCVALAGILTMEPDCLIFDEVTSMLDPDSGKAVLERVKRLHEKGKTIVYITHNLEELQAADRIIVMDRGKIVLEGTPENVLSDLSLRYLGLTPPSLIELAERLKNHGVAVPWEKTSSPSSFAEEICRLFLKT</sequence>
<feature type="chain" id="PRO_0000288020" description="Energy-coupling factor transporter ATP-binding protein EcfA">
    <location>
        <begin position="1"/>
        <end position="274"/>
    </location>
</feature>
<feature type="domain" description="ABC transporter" evidence="1">
    <location>
        <begin position="2"/>
        <end position="235"/>
    </location>
</feature>
<feature type="binding site" evidence="1">
    <location>
        <begin position="35"/>
        <end position="42"/>
    </location>
    <ligand>
        <name>ATP</name>
        <dbReference type="ChEBI" id="CHEBI:30616"/>
    </ligand>
</feature>
<reference key="1">
    <citation type="journal article" date="2002" name="Genome Res.">
        <title>The genome of Methanosarcina acetivorans reveals extensive metabolic and physiological diversity.</title>
        <authorList>
            <person name="Galagan J.E."/>
            <person name="Nusbaum C."/>
            <person name="Roy A."/>
            <person name="Endrizzi M.G."/>
            <person name="Macdonald P."/>
            <person name="FitzHugh W."/>
            <person name="Calvo S."/>
            <person name="Engels R."/>
            <person name="Smirnov S."/>
            <person name="Atnoor D."/>
            <person name="Brown A."/>
            <person name="Allen N."/>
            <person name="Naylor J."/>
            <person name="Stange-Thomann N."/>
            <person name="DeArellano K."/>
            <person name="Johnson R."/>
            <person name="Linton L."/>
            <person name="McEwan P."/>
            <person name="McKernan K."/>
            <person name="Talamas J."/>
            <person name="Tirrell A."/>
            <person name="Ye W."/>
            <person name="Zimmer A."/>
            <person name="Barber R.D."/>
            <person name="Cann I."/>
            <person name="Graham D.E."/>
            <person name="Grahame D.A."/>
            <person name="Guss A.M."/>
            <person name="Hedderich R."/>
            <person name="Ingram-Smith C."/>
            <person name="Kuettner H.C."/>
            <person name="Krzycki J.A."/>
            <person name="Leigh J.A."/>
            <person name="Li W."/>
            <person name="Liu J."/>
            <person name="Mukhopadhyay B."/>
            <person name="Reeve J.N."/>
            <person name="Smith K."/>
            <person name="Springer T.A."/>
            <person name="Umayam L.A."/>
            <person name="White O."/>
            <person name="White R.H."/>
            <person name="de Macario E.C."/>
            <person name="Ferry J.G."/>
            <person name="Jarrell K.F."/>
            <person name="Jing H."/>
            <person name="Macario A.J.L."/>
            <person name="Paulsen I.T."/>
            <person name="Pritchett M."/>
            <person name="Sowers K.R."/>
            <person name="Swanson R.V."/>
            <person name="Zinder S.H."/>
            <person name="Lander E."/>
            <person name="Metcalf W.W."/>
            <person name="Birren B."/>
        </authorList>
    </citation>
    <scope>NUCLEOTIDE SEQUENCE [LARGE SCALE GENOMIC DNA]</scope>
    <source>
        <strain>ATCC 35395 / DSM 2834 / JCM 12185 / C2A</strain>
    </source>
</reference>
<comment type="function">
    <text evidence="1">ATP-binding (A) component of a common energy-coupling factor (ECF) ABC-transporter complex. Unlike classic ABC transporters this ECF transporter provides the energy necessary to transport a number of different substrates.</text>
</comment>
<comment type="subunit">
    <text evidence="1">Forms a stable energy-coupling factor (ECF) transporter complex composed of 2 membrane-embedded substrate-binding proteins (S component), 2 ATP-binding proteins (A component) and 2 transmembrane proteins (T component).</text>
</comment>
<comment type="subcellular location">
    <subcellularLocation>
        <location evidence="1">Cell membrane</location>
        <topology evidence="1">Peripheral membrane protein</topology>
    </subcellularLocation>
</comment>
<comment type="similarity">
    <text evidence="1">Belongs to the ABC transporter superfamily. Energy-coupling factor EcfA family.</text>
</comment>
<dbReference type="EC" id="7.-.-.-" evidence="1"/>
<dbReference type="EMBL" id="AE010299">
    <property type="protein sequence ID" value="AAM07684.1"/>
    <property type="molecule type" value="Genomic_DNA"/>
</dbReference>
<dbReference type="RefSeq" id="WP_011024221.1">
    <property type="nucleotide sequence ID" value="NC_003552.1"/>
</dbReference>
<dbReference type="SMR" id="Q8TI16"/>
<dbReference type="STRING" id="188937.MA_4341"/>
<dbReference type="EnsemblBacteria" id="AAM07684">
    <property type="protein sequence ID" value="AAM07684"/>
    <property type="gene ID" value="MA_4341"/>
</dbReference>
<dbReference type="GeneID" id="1476235"/>
<dbReference type="KEGG" id="mac:MA_4341"/>
<dbReference type="HOGENOM" id="CLU_000604_1_22_2"/>
<dbReference type="InParanoid" id="Q8TI16"/>
<dbReference type="OrthoDB" id="35850at2157"/>
<dbReference type="PhylomeDB" id="Q8TI16"/>
<dbReference type="Proteomes" id="UP000002487">
    <property type="component" value="Chromosome"/>
</dbReference>
<dbReference type="GO" id="GO:0043190">
    <property type="term" value="C:ATP-binding cassette (ABC) transporter complex"/>
    <property type="evidence" value="ECO:0000318"/>
    <property type="project" value="GO_Central"/>
</dbReference>
<dbReference type="GO" id="GO:0005524">
    <property type="term" value="F:ATP binding"/>
    <property type="evidence" value="ECO:0000318"/>
    <property type="project" value="GO_Central"/>
</dbReference>
<dbReference type="GO" id="GO:0016887">
    <property type="term" value="F:ATP hydrolysis activity"/>
    <property type="evidence" value="ECO:0007669"/>
    <property type="project" value="InterPro"/>
</dbReference>
<dbReference type="GO" id="GO:0042626">
    <property type="term" value="F:ATPase-coupled transmembrane transporter activity"/>
    <property type="evidence" value="ECO:0000318"/>
    <property type="project" value="GO_Central"/>
</dbReference>
<dbReference type="CDD" id="cd03225">
    <property type="entry name" value="ABC_cobalt_CbiO_domain1"/>
    <property type="match status" value="1"/>
</dbReference>
<dbReference type="FunFam" id="3.40.50.300:FF:000224">
    <property type="entry name" value="Energy-coupling factor transporter ATP-binding protein EcfA"/>
    <property type="match status" value="1"/>
</dbReference>
<dbReference type="Gene3D" id="3.40.50.300">
    <property type="entry name" value="P-loop containing nucleotide triphosphate hydrolases"/>
    <property type="match status" value="1"/>
</dbReference>
<dbReference type="InterPro" id="IPR003593">
    <property type="entry name" value="AAA+_ATPase"/>
</dbReference>
<dbReference type="InterPro" id="IPR003439">
    <property type="entry name" value="ABC_transporter-like_ATP-bd"/>
</dbReference>
<dbReference type="InterPro" id="IPR015856">
    <property type="entry name" value="ABC_transpr_CbiO/EcfA_su"/>
</dbReference>
<dbReference type="InterPro" id="IPR050095">
    <property type="entry name" value="ECF_ABC_transporter_ATP-bd"/>
</dbReference>
<dbReference type="InterPro" id="IPR030947">
    <property type="entry name" value="EcfA_1"/>
</dbReference>
<dbReference type="InterPro" id="IPR027417">
    <property type="entry name" value="P-loop_NTPase"/>
</dbReference>
<dbReference type="NCBIfam" id="TIGR04520">
    <property type="entry name" value="ECF_ATPase_1"/>
    <property type="match status" value="1"/>
</dbReference>
<dbReference type="PANTHER" id="PTHR43553:SF24">
    <property type="entry name" value="ENERGY-COUPLING FACTOR TRANSPORTER ATP-BINDING PROTEIN ECFA1"/>
    <property type="match status" value="1"/>
</dbReference>
<dbReference type="PANTHER" id="PTHR43553">
    <property type="entry name" value="HEAVY METAL TRANSPORTER"/>
    <property type="match status" value="1"/>
</dbReference>
<dbReference type="Pfam" id="PF00005">
    <property type="entry name" value="ABC_tran"/>
    <property type="match status" value="1"/>
</dbReference>
<dbReference type="SMART" id="SM00382">
    <property type="entry name" value="AAA"/>
    <property type="match status" value="1"/>
</dbReference>
<dbReference type="SUPFAM" id="SSF52540">
    <property type="entry name" value="P-loop containing nucleoside triphosphate hydrolases"/>
    <property type="match status" value="1"/>
</dbReference>
<dbReference type="PROSITE" id="PS50893">
    <property type="entry name" value="ABC_TRANSPORTER_2"/>
    <property type="match status" value="1"/>
</dbReference>
<dbReference type="PROSITE" id="PS51246">
    <property type="entry name" value="CBIO"/>
    <property type="match status" value="1"/>
</dbReference>
<name>ECFA_METAC</name>
<organism>
    <name type="scientific">Methanosarcina acetivorans (strain ATCC 35395 / DSM 2834 / JCM 12185 / C2A)</name>
    <dbReference type="NCBI Taxonomy" id="188937"/>
    <lineage>
        <taxon>Archaea</taxon>
        <taxon>Methanobacteriati</taxon>
        <taxon>Methanobacteriota</taxon>
        <taxon>Stenosarchaea group</taxon>
        <taxon>Methanomicrobia</taxon>
        <taxon>Methanosarcinales</taxon>
        <taxon>Methanosarcinaceae</taxon>
        <taxon>Methanosarcina</taxon>
    </lineage>
</organism>
<keyword id="KW-0067">ATP-binding</keyword>
<keyword id="KW-1003">Cell membrane</keyword>
<keyword id="KW-0472">Membrane</keyword>
<keyword id="KW-0547">Nucleotide-binding</keyword>
<keyword id="KW-1185">Reference proteome</keyword>
<keyword id="KW-1278">Translocase</keyword>
<keyword id="KW-0813">Transport</keyword>
<accession>Q8TI16</accession>
<evidence type="ECO:0000255" key="1">
    <source>
        <dbReference type="HAMAP-Rule" id="MF_01710"/>
    </source>
</evidence>
<protein>
    <recommendedName>
        <fullName evidence="1">Energy-coupling factor transporter ATP-binding protein EcfA</fullName>
        <shortName evidence="1">ECF transporter A component EcfA</shortName>
        <ecNumber evidence="1">7.-.-.-</ecNumber>
    </recommendedName>
</protein>
<gene>
    <name evidence="1" type="primary">ecfA</name>
    <name type="synonym">cbiO</name>
    <name type="ordered locus">MA_4341</name>
</gene>
<proteinExistence type="inferred from homology"/>